<dbReference type="EMBL" id="AK008333">
    <property type="protein sequence ID" value="BAB25610.1"/>
    <property type="molecule type" value="mRNA"/>
</dbReference>
<dbReference type="EMBL" id="BC055712">
    <property type="protein sequence ID" value="AAH55712.1"/>
    <property type="molecule type" value="mRNA"/>
</dbReference>
<dbReference type="EMBL" id="BC059719">
    <property type="protein sequence ID" value="AAH59719.1"/>
    <property type="molecule type" value="mRNA"/>
</dbReference>
<dbReference type="CCDS" id="CCDS36566.1"/>
<dbReference type="RefSeq" id="NP_001348843.1">
    <property type="nucleotide sequence ID" value="NM_001361914.1"/>
</dbReference>
<dbReference type="RefSeq" id="NP_081636.1">
    <property type="nucleotide sequence ID" value="NM_027360.3"/>
</dbReference>
<dbReference type="RefSeq" id="XP_006516277.1">
    <property type="nucleotide sequence ID" value="XM_006516214.3"/>
</dbReference>
<dbReference type="SMR" id="P56379"/>
<dbReference type="BioGRID" id="213945">
    <property type="interactions" value="9"/>
</dbReference>
<dbReference type="FunCoup" id="P56379">
    <property type="interactions" value="385"/>
</dbReference>
<dbReference type="STRING" id="10090.ENSMUSP00000152618"/>
<dbReference type="GlyGen" id="P56379">
    <property type="glycosylation" value="1 site, 1 O-linked glycan (1 site)"/>
</dbReference>
<dbReference type="iPTMnet" id="P56379"/>
<dbReference type="PhosphoSitePlus" id="P56379"/>
<dbReference type="jPOST" id="P56379"/>
<dbReference type="PaxDb" id="10090-ENSMUSP00000021719"/>
<dbReference type="PeptideAtlas" id="P56379"/>
<dbReference type="ProteomicsDB" id="285576"/>
<dbReference type="Pumba" id="P56379"/>
<dbReference type="TopDownProteomics" id="P56379"/>
<dbReference type="Antibodypedia" id="47448">
    <property type="antibodies" value="136 antibodies from 24 providers"/>
</dbReference>
<dbReference type="DNASU" id="70257"/>
<dbReference type="Ensembl" id="ENSMUST00000021719.7">
    <property type="protein sequence ID" value="ENSMUSP00000021719.6"/>
    <property type="gene ID" value="ENSMUSG00000021290.7"/>
</dbReference>
<dbReference type="Ensembl" id="ENSMUST00000222874.2">
    <property type="protein sequence ID" value="ENSMUSP00000152618.2"/>
    <property type="gene ID" value="ENSMUSG00000021290.7"/>
</dbReference>
<dbReference type="GeneID" id="70257"/>
<dbReference type="KEGG" id="mmu:70257"/>
<dbReference type="UCSC" id="uc007pef.1">
    <property type="organism name" value="mouse"/>
</dbReference>
<dbReference type="AGR" id="MGI:1917507"/>
<dbReference type="CTD" id="9556"/>
<dbReference type="MGI" id="MGI:1917507">
    <property type="gene designation" value="Atp5mj"/>
</dbReference>
<dbReference type="VEuPathDB" id="HostDB:ENSMUSG00000021290"/>
<dbReference type="eggNOG" id="ENOG502SVSA">
    <property type="taxonomic scope" value="Eukaryota"/>
</dbReference>
<dbReference type="GeneTree" id="ENSGT00390000016760"/>
<dbReference type="HOGENOM" id="CLU_198465_0_0_1"/>
<dbReference type="InParanoid" id="P56379"/>
<dbReference type="OMA" id="AMIPKSW"/>
<dbReference type="PhylomeDB" id="P56379"/>
<dbReference type="TreeFam" id="TF338412"/>
<dbReference type="Reactome" id="R-MMU-163210">
    <property type="pathway name" value="Formation of ATP by chemiosmotic coupling"/>
</dbReference>
<dbReference type="Reactome" id="R-MMU-8949613">
    <property type="pathway name" value="Cristae formation"/>
</dbReference>
<dbReference type="BioGRID-ORCS" id="70257">
    <property type="hits" value="1 hit in 77 CRISPR screens"/>
</dbReference>
<dbReference type="ChiTaRS" id="Atp5mpl">
    <property type="organism name" value="mouse"/>
</dbReference>
<dbReference type="PRO" id="PR:P56379"/>
<dbReference type="Proteomes" id="UP000000589">
    <property type="component" value="Chromosome 12"/>
</dbReference>
<dbReference type="RNAct" id="P56379">
    <property type="molecule type" value="protein"/>
</dbReference>
<dbReference type="Bgee" id="ENSMUSG00000021290">
    <property type="expression patterns" value="Expressed in right kidney and 264 other cell types or tissues"/>
</dbReference>
<dbReference type="ExpressionAtlas" id="P56379">
    <property type="expression patterns" value="baseline and differential"/>
</dbReference>
<dbReference type="GO" id="GO:0001650">
    <property type="term" value="C:fibrillar center"/>
    <property type="evidence" value="ECO:0007669"/>
    <property type="project" value="Ensembl"/>
</dbReference>
<dbReference type="GO" id="GO:0031966">
    <property type="term" value="C:mitochondrial membrane"/>
    <property type="evidence" value="ECO:0007669"/>
    <property type="project" value="UniProtKB-SubCell"/>
</dbReference>
<dbReference type="GO" id="GO:0005739">
    <property type="term" value="C:mitochondrion"/>
    <property type="evidence" value="ECO:0007005"/>
    <property type="project" value="MGI"/>
</dbReference>
<dbReference type="GO" id="GO:0045259">
    <property type="term" value="C:proton-transporting ATP synthase complex"/>
    <property type="evidence" value="ECO:0000250"/>
    <property type="project" value="UniProtKB"/>
</dbReference>
<dbReference type="InterPro" id="IPR012574">
    <property type="entry name" value="ATP5MJ"/>
</dbReference>
<dbReference type="PANTHER" id="PTHR15233:SF1">
    <property type="entry name" value="ATP SYNTHASE SUBUNIT ATP5MJ, MITOCHONDRIAL"/>
    <property type="match status" value="1"/>
</dbReference>
<dbReference type="PANTHER" id="PTHR15233">
    <property type="entry name" value="MITOCHONDRIAL PROTEOLIPID"/>
    <property type="match status" value="1"/>
</dbReference>
<dbReference type="Pfam" id="PF08039">
    <property type="entry name" value="Mit_proteolip"/>
    <property type="match status" value="1"/>
</dbReference>
<comment type="function">
    <text evidence="2 3">Subunit j, of the mitochondrial membrane ATP synthase complex (F(1)F(0) ATP synthase or Complex V) that produces ATP from ADP in the presence of a proton gradient across the membrane which is generated by electron transport complexes of the respiratory chain. ATP synthase complex consist of a soluble F(1) head domain - the catalytic core - and a membrane F(1) domain - the membrane proton channel. These two domains are linked by a central stalk rotating inside the F(1) region and a stationary peripheral stalk. During catalysis, ATP synthesis in the catalytic domain of F(1) is coupled via a rotary mechanism of the central stalk subunits to proton translocation (By similarity). In vivo, can only synthesize ATP although its ATP hydrolase activity can be activated artificially in vitro (By similarity). Part of the complex F(0) domain. Minor subunit required to maintain the ATP synthase population in the mitochondria (By similarity).</text>
</comment>
<comment type="subunit">
    <text evidence="3">Component of the ATP synthase complex composed at least of ATP5F1A/subunit alpha, ATP5F1B/subunit beta, ATP5MC1/subunit c (homooctomer), MT-ATP6/subunit a, MT-ATP8/subunit 8, ATP5ME/subunit e, ATP5MF/subunit f, ATP5MG/subunit g, ATP5MK/subunit k, ATP5MJ/subunit j, ATP5F1C/subunit gamma, ATP5F1D/subunit delta, ATP5F1E/subunit epsilon, ATP5PF/subunit F6, ATP5PB/subunit b, ATP5PD/subunit d, ATP5PO/subunit OSCP. ATP synthase complex consists of a soluble F(1) head domain (subunits alpha(3) and beta(3)) - the catalytic core - and a membrane F(0) domain - the membrane proton channel (subunits c, a, 8, e, f, g, k and j). These two domains are linked by a central stalk (subunits gamma, delta, and epsilon) rotating inside the F1 region and a stationary peripheral stalk (subunits F6, b, d, and OSCP).</text>
</comment>
<comment type="subcellular location">
    <subcellularLocation>
        <location evidence="3">Mitochondrion membrane</location>
        <topology evidence="4">Single-pass membrane protein</topology>
    </subcellularLocation>
</comment>
<comment type="similarity">
    <text evidence="5">Belongs to the small mitochondrial proteolipid family.</text>
</comment>
<proteinExistence type="evidence at protein level"/>
<evidence type="ECO:0000250" key="1">
    <source>
        <dbReference type="UniProtKB" id="D3Z9R8"/>
    </source>
</evidence>
<evidence type="ECO:0000250" key="2">
    <source>
        <dbReference type="UniProtKB" id="P19483"/>
    </source>
</evidence>
<evidence type="ECO:0000250" key="3">
    <source>
        <dbReference type="UniProtKB" id="P56378"/>
    </source>
</evidence>
<evidence type="ECO:0000255" key="4"/>
<evidence type="ECO:0000305" key="5"/>
<evidence type="ECO:0000312" key="6">
    <source>
        <dbReference type="MGI" id="MGI:1917507"/>
    </source>
</evidence>
<reference key="1">
    <citation type="journal article" date="2005" name="Science">
        <title>The transcriptional landscape of the mammalian genome.</title>
        <authorList>
            <person name="Carninci P."/>
            <person name="Kasukawa T."/>
            <person name="Katayama S."/>
            <person name="Gough J."/>
            <person name="Frith M.C."/>
            <person name="Maeda N."/>
            <person name="Oyama R."/>
            <person name="Ravasi T."/>
            <person name="Lenhard B."/>
            <person name="Wells C."/>
            <person name="Kodzius R."/>
            <person name="Shimokawa K."/>
            <person name="Bajic V.B."/>
            <person name="Brenner S.E."/>
            <person name="Batalov S."/>
            <person name="Forrest A.R."/>
            <person name="Zavolan M."/>
            <person name="Davis M.J."/>
            <person name="Wilming L.G."/>
            <person name="Aidinis V."/>
            <person name="Allen J.E."/>
            <person name="Ambesi-Impiombato A."/>
            <person name="Apweiler R."/>
            <person name="Aturaliya R.N."/>
            <person name="Bailey T.L."/>
            <person name="Bansal M."/>
            <person name="Baxter L."/>
            <person name="Beisel K.W."/>
            <person name="Bersano T."/>
            <person name="Bono H."/>
            <person name="Chalk A.M."/>
            <person name="Chiu K.P."/>
            <person name="Choudhary V."/>
            <person name="Christoffels A."/>
            <person name="Clutterbuck D.R."/>
            <person name="Crowe M.L."/>
            <person name="Dalla E."/>
            <person name="Dalrymple B.P."/>
            <person name="de Bono B."/>
            <person name="Della Gatta G."/>
            <person name="di Bernardo D."/>
            <person name="Down T."/>
            <person name="Engstrom P."/>
            <person name="Fagiolini M."/>
            <person name="Faulkner G."/>
            <person name="Fletcher C.F."/>
            <person name="Fukushima T."/>
            <person name="Furuno M."/>
            <person name="Futaki S."/>
            <person name="Gariboldi M."/>
            <person name="Georgii-Hemming P."/>
            <person name="Gingeras T.R."/>
            <person name="Gojobori T."/>
            <person name="Green R.E."/>
            <person name="Gustincich S."/>
            <person name="Harbers M."/>
            <person name="Hayashi Y."/>
            <person name="Hensch T.K."/>
            <person name="Hirokawa N."/>
            <person name="Hill D."/>
            <person name="Huminiecki L."/>
            <person name="Iacono M."/>
            <person name="Ikeo K."/>
            <person name="Iwama A."/>
            <person name="Ishikawa T."/>
            <person name="Jakt M."/>
            <person name="Kanapin A."/>
            <person name="Katoh M."/>
            <person name="Kawasawa Y."/>
            <person name="Kelso J."/>
            <person name="Kitamura H."/>
            <person name="Kitano H."/>
            <person name="Kollias G."/>
            <person name="Krishnan S.P."/>
            <person name="Kruger A."/>
            <person name="Kummerfeld S.K."/>
            <person name="Kurochkin I.V."/>
            <person name="Lareau L.F."/>
            <person name="Lazarevic D."/>
            <person name="Lipovich L."/>
            <person name="Liu J."/>
            <person name="Liuni S."/>
            <person name="McWilliam S."/>
            <person name="Madan Babu M."/>
            <person name="Madera M."/>
            <person name="Marchionni L."/>
            <person name="Matsuda H."/>
            <person name="Matsuzawa S."/>
            <person name="Miki H."/>
            <person name="Mignone F."/>
            <person name="Miyake S."/>
            <person name="Morris K."/>
            <person name="Mottagui-Tabar S."/>
            <person name="Mulder N."/>
            <person name="Nakano N."/>
            <person name="Nakauchi H."/>
            <person name="Ng P."/>
            <person name="Nilsson R."/>
            <person name="Nishiguchi S."/>
            <person name="Nishikawa S."/>
            <person name="Nori F."/>
            <person name="Ohara O."/>
            <person name="Okazaki Y."/>
            <person name="Orlando V."/>
            <person name="Pang K.C."/>
            <person name="Pavan W.J."/>
            <person name="Pavesi G."/>
            <person name="Pesole G."/>
            <person name="Petrovsky N."/>
            <person name="Piazza S."/>
            <person name="Reed J."/>
            <person name="Reid J.F."/>
            <person name="Ring B.Z."/>
            <person name="Ringwald M."/>
            <person name="Rost B."/>
            <person name="Ruan Y."/>
            <person name="Salzberg S.L."/>
            <person name="Sandelin A."/>
            <person name="Schneider C."/>
            <person name="Schoenbach C."/>
            <person name="Sekiguchi K."/>
            <person name="Semple C.A."/>
            <person name="Seno S."/>
            <person name="Sessa L."/>
            <person name="Sheng Y."/>
            <person name="Shibata Y."/>
            <person name="Shimada H."/>
            <person name="Shimada K."/>
            <person name="Silva D."/>
            <person name="Sinclair B."/>
            <person name="Sperling S."/>
            <person name="Stupka E."/>
            <person name="Sugiura K."/>
            <person name="Sultana R."/>
            <person name="Takenaka Y."/>
            <person name="Taki K."/>
            <person name="Tammoja K."/>
            <person name="Tan S.L."/>
            <person name="Tang S."/>
            <person name="Taylor M.S."/>
            <person name="Tegner J."/>
            <person name="Teichmann S.A."/>
            <person name="Ueda H.R."/>
            <person name="van Nimwegen E."/>
            <person name="Verardo R."/>
            <person name="Wei C.L."/>
            <person name="Yagi K."/>
            <person name="Yamanishi H."/>
            <person name="Zabarovsky E."/>
            <person name="Zhu S."/>
            <person name="Zimmer A."/>
            <person name="Hide W."/>
            <person name="Bult C."/>
            <person name="Grimmond S.M."/>
            <person name="Teasdale R.D."/>
            <person name="Liu E.T."/>
            <person name="Brusic V."/>
            <person name="Quackenbush J."/>
            <person name="Wahlestedt C."/>
            <person name="Mattick J.S."/>
            <person name="Hume D.A."/>
            <person name="Kai C."/>
            <person name="Sasaki D."/>
            <person name="Tomaru Y."/>
            <person name="Fukuda S."/>
            <person name="Kanamori-Katayama M."/>
            <person name="Suzuki M."/>
            <person name="Aoki J."/>
            <person name="Arakawa T."/>
            <person name="Iida J."/>
            <person name="Imamura K."/>
            <person name="Itoh M."/>
            <person name="Kato T."/>
            <person name="Kawaji H."/>
            <person name="Kawagashira N."/>
            <person name="Kawashima T."/>
            <person name="Kojima M."/>
            <person name="Kondo S."/>
            <person name="Konno H."/>
            <person name="Nakano K."/>
            <person name="Ninomiya N."/>
            <person name="Nishio T."/>
            <person name="Okada M."/>
            <person name="Plessy C."/>
            <person name="Shibata K."/>
            <person name="Shiraki T."/>
            <person name="Suzuki S."/>
            <person name="Tagami M."/>
            <person name="Waki K."/>
            <person name="Watahiki A."/>
            <person name="Okamura-Oho Y."/>
            <person name="Suzuki H."/>
            <person name="Kawai J."/>
            <person name="Hayashizaki Y."/>
        </authorList>
    </citation>
    <scope>NUCLEOTIDE SEQUENCE [LARGE SCALE MRNA]</scope>
    <source>
        <strain>C57BL/6J</strain>
        <tissue>Small intestine</tissue>
    </source>
</reference>
<reference key="2">
    <citation type="journal article" date="2004" name="Genome Res.">
        <title>The status, quality, and expansion of the NIH full-length cDNA project: the Mammalian Gene Collection (MGC).</title>
        <authorList>
            <consortium name="The MGC Project Team"/>
        </authorList>
    </citation>
    <scope>NUCLEOTIDE SEQUENCE [LARGE SCALE MRNA]</scope>
    <source>
        <strain>C57BL/6J</strain>
        <tissue>Brain</tissue>
        <tissue>Testis</tissue>
    </source>
</reference>
<reference key="3">
    <citation type="journal article" date="2010" name="Cell">
        <title>A tissue-specific atlas of mouse protein phosphorylation and expression.</title>
        <authorList>
            <person name="Huttlin E.L."/>
            <person name="Jedrychowski M.P."/>
            <person name="Elias J.E."/>
            <person name="Goswami T."/>
            <person name="Rad R."/>
            <person name="Beausoleil S.A."/>
            <person name="Villen J."/>
            <person name="Haas W."/>
            <person name="Sowa M.E."/>
            <person name="Gygi S.P."/>
        </authorList>
    </citation>
    <scope>IDENTIFICATION BY MASS SPECTROMETRY [LARGE SCALE ANALYSIS]</scope>
    <source>
        <tissue>Heart</tissue>
        <tissue>Kidney</tissue>
    </source>
</reference>
<sequence>MFQTLIQKVWVPMKPYYTQVYQEIWVGVGLMSLIVYKIRSADKRSKALKGPAPAHGHH</sequence>
<name>ATP68_MOUSE</name>
<accession>P56379</accession>
<organism>
    <name type="scientific">Mus musculus</name>
    <name type="common">Mouse</name>
    <dbReference type="NCBI Taxonomy" id="10090"/>
    <lineage>
        <taxon>Eukaryota</taxon>
        <taxon>Metazoa</taxon>
        <taxon>Chordata</taxon>
        <taxon>Craniata</taxon>
        <taxon>Vertebrata</taxon>
        <taxon>Euteleostomi</taxon>
        <taxon>Mammalia</taxon>
        <taxon>Eutheria</taxon>
        <taxon>Euarchontoglires</taxon>
        <taxon>Glires</taxon>
        <taxon>Rodentia</taxon>
        <taxon>Myomorpha</taxon>
        <taxon>Muroidea</taxon>
        <taxon>Muridae</taxon>
        <taxon>Murinae</taxon>
        <taxon>Mus</taxon>
        <taxon>Mus</taxon>
    </lineage>
</organism>
<keyword id="KW-0472">Membrane</keyword>
<keyword id="KW-0496">Mitochondrion</keyword>
<keyword id="KW-1185">Reference proteome</keyword>
<keyword id="KW-0812">Transmembrane</keyword>
<keyword id="KW-1133">Transmembrane helix</keyword>
<gene>
    <name evidence="6" type="primary">Atp5mj</name>
    <name evidence="6" type="synonym">Atp5mpl</name>
    <name type="synonym">Mp68</name>
</gene>
<feature type="chain" id="PRO_0000064394" description="ATP synthase F(0) complex subunit j, mitochondrial">
    <location>
        <begin position="1"/>
        <end position="58"/>
    </location>
</feature>
<feature type="transmembrane region" description="Helical" evidence="3">
    <location>
        <begin position="22"/>
        <end position="39"/>
    </location>
</feature>
<protein>
    <recommendedName>
        <fullName evidence="5">ATP synthase F(0) complex subunit j, mitochondrial</fullName>
    </recommendedName>
    <alternativeName>
        <fullName evidence="1">6.8 kDa mitochondrial proteolipid protein</fullName>
        <shortName evidence="1">MLQ</shortName>
    </alternativeName>
    <alternativeName>
        <fullName evidence="6">ATP synthase membrane subunit 6.8PL</fullName>
    </alternativeName>
    <alternativeName>
        <fullName evidence="5">ATP synthase subunit ATP5MPL, mitochondrial</fullName>
    </alternativeName>
</protein>